<sequence>AVPDKIDPRESGYVTGVKDQ</sequence>
<reference key="1">
    <citation type="journal article" date="1993" name="Mol. Biochem. Parasitol.">
        <title>Purification of a cathepsin L-like proteinase secreted by adult Fasciola hepatica.</title>
        <authorList>
            <person name="Smith A.M."/>
            <person name="Dowd A.J."/>
            <person name="McGonigle S."/>
            <person name="Keegan P.S."/>
            <person name="Brennan G."/>
            <person name="Trudgett A."/>
            <person name="Dalton J.P."/>
        </authorList>
    </citation>
    <scope>PROTEIN SEQUENCE</scope>
</reference>
<proteinExistence type="evidence at protein level"/>
<accession>Q09093</accession>
<comment type="function">
    <text>Thiol protease that assists the parasite in burrowing through the gut wall and liver of its mammalian host.</text>
</comment>
<comment type="catalytic activity">
    <reaction>
        <text>Specificity close to that of papain. As compared to cathepsin B, cathepsin L exhibits higher activity toward protein substrates, but has little activity on Z-Arg-Arg-NHMec, and no peptidyl-dipeptidase activity.</text>
        <dbReference type="EC" id="3.4.22.15"/>
    </reaction>
</comment>
<comment type="subunit">
    <text>Dimer of a heavy and a light chain linked by disulfide bonds.</text>
</comment>
<comment type="subcellular location">
    <subcellularLocation>
        <location>Lysosome</location>
    </subcellularLocation>
</comment>
<comment type="similarity">
    <text evidence="1 2 3">Belongs to the peptidase C1 family.</text>
</comment>
<evidence type="ECO:0000255" key="1">
    <source>
        <dbReference type="PROSITE-ProRule" id="PRU10088"/>
    </source>
</evidence>
<evidence type="ECO:0000255" key="2">
    <source>
        <dbReference type="PROSITE-ProRule" id="PRU10089"/>
    </source>
</evidence>
<evidence type="ECO:0000255" key="3">
    <source>
        <dbReference type="PROSITE-ProRule" id="PRU10090"/>
    </source>
</evidence>
<evidence type="ECO:0000256" key="4">
    <source>
        <dbReference type="SAM" id="MobiDB-lite"/>
    </source>
</evidence>
<dbReference type="EC" id="3.4.22.15"/>
<dbReference type="PIR" id="S68785">
    <property type="entry name" value="S68785"/>
</dbReference>
<dbReference type="ChEMBL" id="CHEMBL5169145"/>
<dbReference type="DrugBank" id="DB12245">
    <property type="generic name" value="Triclabendazole"/>
</dbReference>
<dbReference type="GO" id="GO:0005764">
    <property type="term" value="C:lysosome"/>
    <property type="evidence" value="ECO:0007669"/>
    <property type="project" value="UniProtKB-SubCell"/>
</dbReference>
<dbReference type="GO" id="GO:0004197">
    <property type="term" value="F:cysteine-type endopeptidase activity"/>
    <property type="evidence" value="ECO:0007669"/>
    <property type="project" value="UniProtKB-EC"/>
</dbReference>
<dbReference type="GO" id="GO:0006508">
    <property type="term" value="P:proteolysis"/>
    <property type="evidence" value="ECO:0007669"/>
    <property type="project" value="UniProtKB-KW"/>
</dbReference>
<protein>
    <recommendedName>
        <fullName>Cathepsin L1</fullName>
        <ecNumber>3.4.22.15</ecNumber>
    </recommendedName>
</protein>
<keyword id="KW-0903">Direct protein sequencing</keyword>
<keyword id="KW-1015">Disulfide bond</keyword>
<keyword id="KW-0378">Hydrolase</keyword>
<keyword id="KW-0458">Lysosome</keyword>
<keyword id="KW-0645">Protease</keyword>
<keyword id="KW-0788">Thiol protease</keyword>
<organism>
    <name type="scientific">Fasciola hepatica</name>
    <name type="common">Liver fluke</name>
    <dbReference type="NCBI Taxonomy" id="6192"/>
    <lineage>
        <taxon>Eukaryota</taxon>
        <taxon>Metazoa</taxon>
        <taxon>Spiralia</taxon>
        <taxon>Lophotrochozoa</taxon>
        <taxon>Platyhelminthes</taxon>
        <taxon>Trematoda</taxon>
        <taxon>Digenea</taxon>
        <taxon>Plagiorchiida</taxon>
        <taxon>Echinostomata</taxon>
        <taxon>Echinostomatoidea</taxon>
        <taxon>Fasciolidae</taxon>
        <taxon>Fasciola</taxon>
    </lineage>
</organism>
<feature type="chain" id="PRO_0000050538" description="Cathepsin L1">
    <location>
        <begin position="1"/>
        <end position="20" status="greater than"/>
    </location>
</feature>
<feature type="region of interest" description="Disordered" evidence="4">
    <location>
        <begin position="1"/>
        <end position="20"/>
    </location>
</feature>
<feature type="compositionally biased region" description="Basic and acidic residues" evidence="4">
    <location>
        <begin position="1"/>
        <end position="10"/>
    </location>
</feature>
<feature type="non-terminal residue">
    <location>
        <position position="20"/>
    </location>
</feature>
<name>CATL1_FASHE</name>